<name>ENGB_ECOLI</name>
<comment type="function">
    <text evidence="1 2">Necessary for normal cell division and for the maintenance of normal septation. Depletion of this protein leads to a severe reduction in growth rate and to extensive filamentation, with a block beyond the stage of segregation. Essential for bacteria survival.</text>
</comment>
<comment type="cofactor">
    <cofactor evidence="1">
        <name>Mg(2+)</name>
        <dbReference type="ChEBI" id="CHEBI:18420"/>
    </cofactor>
</comment>
<comment type="similarity">
    <text evidence="1">Belongs to the TRAFAC class TrmE-Era-EngA-EngB-Septin-like GTPase superfamily. EngB GTPase family.</text>
</comment>
<comment type="sequence caution" evidence="3">
    <conflict type="erroneous initiation">
        <sequence resource="EMBL-CDS" id="AAA24403"/>
    </conflict>
</comment>
<comment type="sequence caution" evidence="3">
    <conflict type="erroneous initiation">
        <sequence resource="EMBL-CDS" id="AAB02999"/>
    </conflict>
</comment>
<comment type="sequence caution" evidence="3">
    <conflict type="erroneous initiation">
        <sequence resource="EMBL-CDS" id="BAE77444"/>
    </conflict>
</comment>
<feature type="chain" id="PRO_0000157747" description="Probable GTP-binding protein EngB">
    <location>
        <begin position="1"/>
        <end position="210"/>
    </location>
</feature>
<feature type="domain" description="EngB-type G" evidence="1">
    <location>
        <begin position="25"/>
        <end position="199"/>
    </location>
</feature>
<feature type="binding site" evidence="1">
    <location>
        <begin position="33"/>
        <end position="40"/>
    </location>
    <ligand>
        <name>GTP</name>
        <dbReference type="ChEBI" id="CHEBI:37565"/>
    </ligand>
</feature>
<feature type="binding site" evidence="1">
    <location>
        <position position="40"/>
    </location>
    <ligand>
        <name>Mg(2+)</name>
        <dbReference type="ChEBI" id="CHEBI:18420"/>
    </ligand>
</feature>
<feature type="binding site" evidence="1">
    <location>
        <begin position="60"/>
        <end position="64"/>
    </location>
    <ligand>
        <name>GTP</name>
        <dbReference type="ChEBI" id="CHEBI:37565"/>
    </ligand>
</feature>
<feature type="binding site" evidence="1">
    <location>
        <position position="62"/>
    </location>
    <ligand>
        <name>Mg(2+)</name>
        <dbReference type="ChEBI" id="CHEBI:18420"/>
    </ligand>
</feature>
<feature type="binding site" evidence="1">
    <location>
        <begin position="78"/>
        <end position="81"/>
    </location>
    <ligand>
        <name>GTP</name>
        <dbReference type="ChEBI" id="CHEBI:37565"/>
    </ligand>
</feature>
<feature type="binding site" evidence="1">
    <location>
        <begin position="145"/>
        <end position="148"/>
    </location>
    <ligand>
        <name>GTP</name>
        <dbReference type="ChEBI" id="CHEBI:37565"/>
    </ligand>
</feature>
<feature type="binding site" evidence="1">
    <location>
        <begin position="178"/>
        <end position="180"/>
    </location>
    <ligand>
        <name>GTP</name>
        <dbReference type="ChEBI" id="CHEBI:37565"/>
    </ligand>
</feature>
<feature type="strand" evidence="4">
    <location>
        <begin position="12"/>
        <end position="17"/>
    </location>
</feature>
<feature type="helix" evidence="4">
    <location>
        <begin position="18"/>
        <end position="20"/>
    </location>
</feature>
<feature type="strand" evidence="4">
    <location>
        <begin position="26"/>
        <end position="33"/>
    </location>
</feature>
<feature type="helix" evidence="4">
    <location>
        <begin position="39"/>
        <end position="43"/>
    </location>
</feature>
<feature type="turn" evidence="4">
    <location>
        <begin position="44"/>
        <end position="46"/>
    </location>
</feature>
<feature type="strand" evidence="4">
    <location>
        <begin position="65"/>
        <end position="71"/>
    </location>
</feature>
<feature type="strand" evidence="4">
    <location>
        <begin position="74"/>
        <end position="78"/>
    </location>
</feature>
<feature type="helix" evidence="4">
    <location>
        <begin position="92"/>
        <end position="105"/>
    </location>
</feature>
<feature type="strand" evidence="4">
    <location>
        <begin position="109"/>
        <end position="117"/>
    </location>
</feature>
<feature type="helix" evidence="4">
    <location>
        <begin position="124"/>
        <end position="135"/>
    </location>
</feature>
<feature type="strand" evidence="4">
    <location>
        <begin position="140"/>
        <end position="145"/>
    </location>
</feature>
<feature type="helix" evidence="4">
    <location>
        <begin position="147"/>
        <end position="149"/>
    </location>
</feature>
<feature type="helix" evidence="4">
    <location>
        <begin position="152"/>
        <end position="166"/>
    </location>
</feature>
<feature type="helix" evidence="4">
    <location>
        <begin position="167"/>
        <end position="169"/>
    </location>
</feature>
<feature type="strand" evidence="4">
    <location>
        <begin position="173"/>
        <end position="177"/>
    </location>
</feature>
<feature type="turn" evidence="4">
    <location>
        <begin position="180"/>
        <end position="183"/>
    </location>
</feature>
<feature type="helix" evidence="4">
    <location>
        <begin position="186"/>
        <end position="197"/>
    </location>
</feature>
<organism>
    <name type="scientific">Escherichia coli (strain K12)</name>
    <dbReference type="NCBI Taxonomy" id="83333"/>
    <lineage>
        <taxon>Bacteria</taxon>
        <taxon>Pseudomonadati</taxon>
        <taxon>Pseudomonadota</taxon>
        <taxon>Gammaproteobacteria</taxon>
        <taxon>Enterobacterales</taxon>
        <taxon>Enterobacteriaceae</taxon>
        <taxon>Escherichia</taxon>
    </lineage>
</organism>
<protein>
    <recommendedName>
        <fullName evidence="1">Probable GTP-binding protein EngB</fullName>
    </recommendedName>
</protein>
<evidence type="ECO:0000255" key="1">
    <source>
        <dbReference type="HAMAP-Rule" id="MF_00321"/>
    </source>
</evidence>
<evidence type="ECO:0000269" key="2">
    <source>
    </source>
</evidence>
<evidence type="ECO:0000305" key="3"/>
<evidence type="ECO:0007829" key="4">
    <source>
        <dbReference type="PDB" id="1PUI"/>
    </source>
</evidence>
<keyword id="KW-0002">3D-structure</keyword>
<keyword id="KW-0131">Cell cycle</keyword>
<keyword id="KW-0132">Cell division</keyword>
<keyword id="KW-0342">GTP-binding</keyword>
<keyword id="KW-0460">Magnesium</keyword>
<keyword id="KW-0479">Metal-binding</keyword>
<keyword id="KW-0547">Nucleotide-binding</keyword>
<keyword id="KW-1185">Reference proteome</keyword>
<keyword id="KW-0717">Septation</keyword>
<reference key="1">
    <citation type="journal article" date="1982" name="J. Bacteriol.">
        <title>Identification of two genes immediately downstream from the polA gene of Escherichia coli.</title>
        <authorList>
            <person name="Joyce C.M."/>
            <person name="Grindley N.D."/>
        </authorList>
    </citation>
    <scope>NUCLEOTIDE SEQUENCE [GENOMIC DNA]</scope>
    <source>
        <strain>K12</strain>
    </source>
</reference>
<reference key="2">
    <citation type="journal article" date="1993" name="Nucleic Acids Res.">
        <title>Analysis of the Escherichia coli genome. III. DNA sequence of the region from 87.2 to 89.2 minutes.</title>
        <authorList>
            <person name="Plunkett G. III"/>
            <person name="Burland V."/>
            <person name="Daniels D.L."/>
            <person name="Blattner F.R."/>
        </authorList>
    </citation>
    <scope>NUCLEOTIDE SEQUENCE [LARGE SCALE GENOMIC DNA]</scope>
    <source>
        <strain>K12 / MG1655 / ATCC 47076</strain>
    </source>
</reference>
<reference key="3">
    <citation type="journal article" date="1997" name="Science">
        <title>The complete genome sequence of Escherichia coli K-12.</title>
        <authorList>
            <person name="Blattner F.R."/>
            <person name="Plunkett G. III"/>
            <person name="Bloch C.A."/>
            <person name="Perna N.T."/>
            <person name="Burland V."/>
            <person name="Riley M."/>
            <person name="Collado-Vides J."/>
            <person name="Glasner J.D."/>
            <person name="Rode C.K."/>
            <person name="Mayhew G.F."/>
            <person name="Gregor J."/>
            <person name="Davis N.W."/>
            <person name="Kirkpatrick H.A."/>
            <person name="Goeden M.A."/>
            <person name="Rose D.J."/>
            <person name="Mau B."/>
            <person name="Shao Y."/>
        </authorList>
    </citation>
    <scope>NUCLEOTIDE SEQUENCE [LARGE SCALE GENOMIC DNA]</scope>
    <source>
        <strain>K12 / MG1655 / ATCC 47076</strain>
    </source>
</reference>
<reference key="4">
    <citation type="journal article" date="2006" name="Mol. Syst. Biol.">
        <title>Highly accurate genome sequences of Escherichia coli K-12 strains MG1655 and W3110.</title>
        <authorList>
            <person name="Hayashi K."/>
            <person name="Morooka N."/>
            <person name="Yamamoto Y."/>
            <person name="Fujita K."/>
            <person name="Isono K."/>
            <person name="Choi S."/>
            <person name="Ohtsubo E."/>
            <person name="Baba T."/>
            <person name="Wanner B.L."/>
            <person name="Mori H."/>
            <person name="Horiuchi T."/>
        </authorList>
    </citation>
    <scope>NUCLEOTIDE SEQUENCE [LARGE SCALE GENOMIC DNA]</scope>
    <source>
        <strain>K12 / W3110 / ATCC 27325 / DSM 5911</strain>
    </source>
</reference>
<reference key="5">
    <citation type="journal article" date="1999" name="Biochimie">
        <title>A new essential gene of the 'minimal genome' affecting cell division.</title>
        <authorList>
            <person name="Dassain M."/>
            <person name="Leroy A."/>
            <person name="Colosetti L."/>
            <person name="Carole S."/>
            <person name="Bouche J.-P."/>
        </authorList>
    </citation>
    <scope>FUNCTION</scope>
</reference>
<reference key="6">
    <citation type="submission" date="1998-03" db="UniProtKB">
        <authorList>
            <person name="Loferer H."/>
        </authorList>
    </citation>
    <scope>IDENTIFICATION OF START CODON</scope>
</reference>
<sequence length="210" mass="23561">MTNLNYQQTHFVMSAPDIRHLPSDTGIEVAFAGRSNAGKSSALNTLTNQKSLARTSKTPGRTQLINLFEVADGKRLVDLPGYGYAEVPEEMKRKWQRALGEYLEKRQSLQGLVVLMDIRHPLKDLDQQMIEWAVDSNIAVLVLLTKADKLASGARKAQLNMVREAVLAFNGDVQVETFSSLKKQGVDKLRQKLDTWFSEMQPVEETQDGE</sequence>
<accession>P0A6P7</accession>
<accession>P24253</accession>
<accession>P76771</accession>
<accession>Q2M8G2</accession>
<proteinExistence type="evidence at protein level"/>
<gene>
    <name evidence="1" type="primary">engB</name>
    <name type="synonym">yihA</name>
    <name type="ordered locus">b3865</name>
    <name type="ordered locus">JW5930</name>
</gene>
<dbReference type="EMBL" id="J01663">
    <property type="protein sequence ID" value="AAA24403.1"/>
    <property type="status" value="ALT_INIT"/>
    <property type="molecule type" value="Genomic_DNA"/>
</dbReference>
<dbReference type="EMBL" id="L19201">
    <property type="protein sequence ID" value="AAB02999.1"/>
    <property type="status" value="ALT_INIT"/>
    <property type="molecule type" value="Genomic_DNA"/>
</dbReference>
<dbReference type="EMBL" id="U00096">
    <property type="protein sequence ID" value="AAC76862.3"/>
    <property type="molecule type" value="Genomic_DNA"/>
</dbReference>
<dbReference type="EMBL" id="AP009048">
    <property type="protein sequence ID" value="BAE77444.1"/>
    <property type="status" value="ALT_INIT"/>
    <property type="molecule type" value="Genomic_DNA"/>
</dbReference>
<dbReference type="PIR" id="S40810">
    <property type="entry name" value="S40810"/>
</dbReference>
<dbReference type="RefSeq" id="NP_418301.3">
    <property type="nucleotide sequence ID" value="NC_000913.3"/>
</dbReference>
<dbReference type="RefSeq" id="WP_000183349.1">
    <property type="nucleotide sequence ID" value="NZ_STEB01000017.1"/>
</dbReference>
<dbReference type="PDB" id="1PUI">
    <property type="method" value="X-ray"/>
    <property type="resolution" value="2.00 A"/>
    <property type="chains" value="A/B=1-210"/>
</dbReference>
<dbReference type="PDBsum" id="1PUI"/>
<dbReference type="SMR" id="P0A6P7"/>
<dbReference type="BioGRID" id="4262625">
    <property type="interactions" value="428"/>
</dbReference>
<dbReference type="DIP" id="DIP-48178N"/>
<dbReference type="FunCoup" id="P0A6P7">
    <property type="interactions" value="530"/>
</dbReference>
<dbReference type="STRING" id="511145.b3865"/>
<dbReference type="jPOST" id="P0A6P7"/>
<dbReference type="PaxDb" id="511145-b3865"/>
<dbReference type="EnsemblBacteria" id="AAC76862">
    <property type="protein sequence ID" value="AAC76862"/>
    <property type="gene ID" value="b3865"/>
</dbReference>
<dbReference type="GeneID" id="93778072"/>
<dbReference type="GeneID" id="948358"/>
<dbReference type="KEGG" id="ecj:JW5930"/>
<dbReference type="KEGG" id="eco:b3865"/>
<dbReference type="KEGG" id="ecoc:C3026_20890"/>
<dbReference type="PATRIC" id="fig|1411691.4.peg.2848"/>
<dbReference type="EchoBASE" id="EB1188"/>
<dbReference type="eggNOG" id="COG0218">
    <property type="taxonomic scope" value="Bacteria"/>
</dbReference>
<dbReference type="HOGENOM" id="CLU_033732_1_0_6"/>
<dbReference type="InParanoid" id="P0A6P7"/>
<dbReference type="OMA" id="AKVDQCP"/>
<dbReference type="OrthoDB" id="9804921at2"/>
<dbReference type="PhylomeDB" id="P0A6P7"/>
<dbReference type="BioCyc" id="EcoCyc:EG11203-MONOMER"/>
<dbReference type="EvolutionaryTrace" id="P0A6P7"/>
<dbReference type="PRO" id="PR:P0A6P7"/>
<dbReference type="Proteomes" id="UP000000625">
    <property type="component" value="Chromosome"/>
</dbReference>
<dbReference type="GO" id="GO:0005829">
    <property type="term" value="C:cytosol"/>
    <property type="evidence" value="ECO:0000314"/>
    <property type="project" value="EcoCyc"/>
</dbReference>
<dbReference type="GO" id="GO:0005525">
    <property type="term" value="F:GTP binding"/>
    <property type="evidence" value="ECO:0000314"/>
    <property type="project" value="EcoCyc"/>
</dbReference>
<dbReference type="GO" id="GO:0046872">
    <property type="term" value="F:metal ion binding"/>
    <property type="evidence" value="ECO:0007669"/>
    <property type="project" value="UniProtKB-KW"/>
</dbReference>
<dbReference type="GO" id="GO:0000917">
    <property type="term" value="P:division septum assembly"/>
    <property type="evidence" value="ECO:0007669"/>
    <property type="project" value="UniProtKB-KW"/>
</dbReference>
<dbReference type="CDD" id="cd01876">
    <property type="entry name" value="YihA_EngB"/>
    <property type="match status" value="1"/>
</dbReference>
<dbReference type="FunFam" id="3.40.50.300:FF:000098">
    <property type="entry name" value="Probable GTP-binding protein EngB"/>
    <property type="match status" value="1"/>
</dbReference>
<dbReference type="Gene3D" id="3.40.50.300">
    <property type="entry name" value="P-loop containing nucleotide triphosphate hydrolases"/>
    <property type="match status" value="1"/>
</dbReference>
<dbReference type="HAMAP" id="MF_00321">
    <property type="entry name" value="GTPase_EngB"/>
    <property type="match status" value="1"/>
</dbReference>
<dbReference type="InterPro" id="IPR030393">
    <property type="entry name" value="G_ENGB_dom"/>
</dbReference>
<dbReference type="InterPro" id="IPR006073">
    <property type="entry name" value="GTP-bd"/>
</dbReference>
<dbReference type="InterPro" id="IPR019987">
    <property type="entry name" value="GTP-bd_ribosome_bio_YsxC"/>
</dbReference>
<dbReference type="InterPro" id="IPR027417">
    <property type="entry name" value="P-loop_NTPase"/>
</dbReference>
<dbReference type="NCBIfam" id="TIGR03598">
    <property type="entry name" value="GTPase_YsxC"/>
    <property type="match status" value="1"/>
</dbReference>
<dbReference type="PANTHER" id="PTHR11649:SF13">
    <property type="entry name" value="ENGB-TYPE G DOMAIN-CONTAINING PROTEIN"/>
    <property type="match status" value="1"/>
</dbReference>
<dbReference type="PANTHER" id="PTHR11649">
    <property type="entry name" value="MSS1/TRME-RELATED GTP-BINDING PROTEIN"/>
    <property type="match status" value="1"/>
</dbReference>
<dbReference type="Pfam" id="PF01926">
    <property type="entry name" value="MMR_HSR1"/>
    <property type="match status" value="1"/>
</dbReference>
<dbReference type="SUPFAM" id="SSF52540">
    <property type="entry name" value="P-loop containing nucleoside triphosphate hydrolases"/>
    <property type="match status" value="1"/>
</dbReference>
<dbReference type="PROSITE" id="PS51706">
    <property type="entry name" value="G_ENGB"/>
    <property type="match status" value="1"/>
</dbReference>